<organism>
    <name type="scientific">Bacillus subtilis (strain 168)</name>
    <dbReference type="NCBI Taxonomy" id="224308"/>
    <lineage>
        <taxon>Bacteria</taxon>
        <taxon>Bacillati</taxon>
        <taxon>Bacillota</taxon>
        <taxon>Bacilli</taxon>
        <taxon>Bacillales</taxon>
        <taxon>Bacillaceae</taxon>
        <taxon>Bacillus</taxon>
    </lineage>
</organism>
<dbReference type="EMBL" id="X87807">
    <property type="protein sequence ID" value="CAA61074.1"/>
    <property type="molecule type" value="Genomic_DNA"/>
</dbReference>
<dbReference type="EMBL" id="Y14077">
    <property type="protein sequence ID" value="CAA74409.1"/>
    <property type="molecule type" value="Genomic_DNA"/>
</dbReference>
<dbReference type="EMBL" id="AL009126">
    <property type="protein sequence ID" value="CAB12844.1"/>
    <property type="molecule type" value="Genomic_DNA"/>
</dbReference>
<dbReference type="PIR" id="F69619">
    <property type="entry name" value="F69619"/>
</dbReference>
<dbReference type="RefSeq" id="NP_388885.1">
    <property type="nucleotide sequence ID" value="NC_000964.3"/>
</dbReference>
<dbReference type="RefSeq" id="WP_003233230.1">
    <property type="nucleotide sequence ID" value="NZ_OZ025638.1"/>
</dbReference>
<dbReference type="SMR" id="P55339"/>
<dbReference type="FunCoup" id="P55339">
    <property type="interactions" value="42"/>
</dbReference>
<dbReference type="STRING" id="224308.BSU10040"/>
<dbReference type="TCDB" id="3.A.1.143.1">
    <property type="family name" value="the atp-binding cassette (abc) superfamily"/>
</dbReference>
<dbReference type="PaxDb" id="224308-BSU10040"/>
<dbReference type="EnsemblBacteria" id="CAB12844">
    <property type="protein sequence ID" value="CAB12844"/>
    <property type="gene ID" value="BSU_10040"/>
</dbReference>
<dbReference type="GeneID" id="11238892"/>
<dbReference type="GeneID" id="936293"/>
<dbReference type="KEGG" id="bsu:BSU10040"/>
<dbReference type="PATRIC" id="fig|224308.179.peg.1080"/>
<dbReference type="eggNOG" id="COG1131">
    <property type="taxonomic scope" value="Bacteria"/>
</dbReference>
<dbReference type="InParanoid" id="P55339"/>
<dbReference type="OrthoDB" id="9804819at2"/>
<dbReference type="PhylomeDB" id="P55339"/>
<dbReference type="BioCyc" id="BSUB:BSU10040-MONOMER"/>
<dbReference type="PRO" id="PR:P55339"/>
<dbReference type="Proteomes" id="UP000001570">
    <property type="component" value="Chromosome"/>
</dbReference>
<dbReference type="GO" id="GO:0005524">
    <property type="term" value="F:ATP binding"/>
    <property type="evidence" value="ECO:0007669"/>
    <property type="project" value="UniProtKB-KW"/>
</dbReference>
<dbReference type="GO" id="GO:0016887">
    <property type="term" value="F:ATP hydrolysis activity"/>
    <property type="evidence" value="ECO:0007669"/>
    <property type="project" value="InterPro"/>
</dbReference>
<dbReference type="GO" id="GO:0030420">
    <property type="term" value="P:establishment of competence for transformation"/>
    <property type="evidence" value="ECO:0007669"/>
    <property type="project" value="UniProtKB-KW"/>
</dbReference>
<dbReference type="GO" id="GO:0030435">
    <property type="term" value="P:sporulation resulting in formation of a cellular spore"/>
    <property type="evidence" value="ECO:0007669"/>
    <property type="project" value="UniProtKB-KW"/>
</dbReference>
<dbReference type="CDD" id="cd03230">
    <property type="entry name" value="ABC_DR_subfamily_A"/>
    <property type="match status" value="1"/>
</dbReference>
<dbReference type="Gene3D" id="3.40.50.300">
    <property type="entry name" value="P-loop containing nucleotide triphosphate hydrolases"/>
    <property type="match status" value="1"/>
</dbReference>
<dbReference type="InterPro" id="IPR003593">
    <property type="entry name" value="AAA+_ATPase"/>
</dbReference>
<dbReference type="InterPro" id="IPR003439">
    <property type="entry name" value="ABC_transporter-like_ATP-bd"/>
</dbReference>
<dbReference type="InterPro" id="IPR051782">
    <property type="entry name" value="ABC_Transporter_VariousFunc"/>
</dbReference>
<dbReference type="InterPro" id="IPR027417">
    <property type="entry name" value="P-loop_NTPase"/>
</dbReference>
<dbReference type="PANTHER" id="PTHR42939">
    <property type="entry name" value="ABC TRANSPORTER ATP-BINDING PROTEIN ALBC-RELATED"/>
    <property type="match status" value="1"/>
</dbReference>
<dbReference type="PANTHER" id="PTHR42939:SF5">
    <property type="entry name" value="ABC-TYPE TRANSPORTER ATP-BINDING PROTEIN ECSA"/>
    <property type="match status" value="1"/>
</dbReference>
<dbReference type="Pfam" id="PF00005">
    <property type="entry name" value="ABC_tran"/>
    <property type="match status" value="1"/>
</dbReference>
<dbReference type="SMART" id="SM00382">
    <property type="entry name" value="AAA"/>
    <property type="match status" value="1"/>
</dbReference>
<dbReference type="SUPFAM" id="SSF52540">
    <property type="entry name" value="P-loop containing nucleoside triphosphate hydrolases"/>
    <property type="match status" value="1"/>
</dbReference>
<dbReference type="PROSITE" id="PS50893">
    <property type="entry name" value="ABC_TRANSPORTER_2"/>
    <property type="match status" value="1"/>
</dbReference>
<feature type="chain" id="PRO_0000092320" description="ABC-type transporter ATP-binding protein EcsA">
    <location>
        <begin position="1"/>
        <end position="247"/>
    </location>
</feature>
<feature type="domain" description="ABC transporter" evidence="1">
    <location>
        <begin position="4"/>
        <end position="234"/>
    </location>
</feature>
<feature type="binding site" evidence="1">
    <location>
        <begin position="36"/>
        <end position="43"/>
    </location>
    <ligand>
        <name>ATP</name>
        <dbReference type="ChEBI" id="CHEBI:30616"/>
    </ligand>
</feature>
<feature type="mutagenesis site" description="In ecsA-26; exoamylase and other exoenzymes decrease, competence- and sporulation-deficient phenotype." evidence="2">
    <original>G</original>
    <variation>E</variation>
    <location>
        <position position="164"/>
    </location>
</feature>
<accession>P55339</accession>
<proteinExistence type="evidence at protein level"/>
<gene>
    <name type="primary">ecsA</name>
    <name type="synonym">prsT</name>
    <name type="synonym">yhaD</name>
    <name type="ordered locus">BSU10040</name>
</gene>
<keyword id="KW-0067">ATP-binding</keyword>
<keyword id="KW-0178">Competence</keyword>
<keyword id="KW-0547">Nucleotide-binding</keyword>
<keyword id="KW-1185">Reference proteome</keyword>
<keyword id="KW-0749">Sporulation</keyword>
<keyword id="KW-0813">Transport</keyword>
<name>ECSA_BACSU</name>
<sequence>MSLLSVKDLTGGYTRNPVLKNVSFTLEPNQIVGLIGLNGAGKSTTIRHIIGLMDPHKGSIELNGKTFAEDPEGYRSQFTYIPETPVLYEELTLMEHLELTAMAYGLSKETMEKRLPPLLKEFRMEKRLKWFPAHFSKGMKQKVMIMCAFLAEPALYIIDEPFLGLDPLAINALLERMNEAKKGGASVLMSTHILATAERYCDSFIILHNGEVRARGTLSELREQFGMKDAALDDLYLELTKEDAGHE</sequence>
<protein>
    <recommendedName>
        <fullName>ABC-type transporter ATP-binding protein EcsA</fullName>
    </recommendedName>
</protein>
<comment type="function">
    <text evidence="2">Has a role in exoprotein production, sporulation and competence.</text>
</comment>
<comment type="similarity">
    <text evidence="3">Belongs to the ABC transporter superfamily.</text>
</comment>
<reference key="1">
    <citation type="journal article" date="1996" name="Microbiology">
        <title>Molecular analysis of an operon in Bacillus subtilis encoding a novel ABC transporter with a role in exoprotein production, sporulation and competence.</title>
        <authorList>
            <person name="Leskela S."/>
            <person name="Kontinen V.P."/>
            <person name="Sarvas M."/>
        </authorList>
    </citation>
    <scope>NUCLEOTIDE SEQUENCE [GENOMIC DNA]</scope>
    <scope>FUNCTION</scope>
    <scope>MUTAGENESIS OF GLY-164</scope>
    <source>
        <strain>168</strain>
    </source>
</reference>
<reference key="2">
    <citation type="journal article" date="1998" name="Microbiology">
        <title>The 172 kb prkA-addAB region from 83 degrees to 97 degrees of the Bacillus subtilis chromosome contains several dysfunctional genes, the glyB marker, many genes encoding transporter proteins, and the ubiquitous hit gene.</title>
        <authorList>
            <person name="Noback M.A."/>
            <person name="Holsappel S."/>
            <person name="Kiewiet R."/>
            <person name="Terpstra P."/>
            <person name="Wambutt R."/>
            <person name="Wedler H."/>
            <person name="Venema G."/>
            <person name="Bron S."/>
        </authorList>
    </citation>
    <scope>NUCLEOTIDE SEQUENCE [GENOMIC DNA]</scope>
    <source>
        <strain>168</strain>
    </source>
</reference>
<reference key="3">
    <citation type="journal article" date="1997" name="Nature">
        <title>The complete genome sequence of the Gram-positive bacterium Bacillus subtilis.</title>
        <authorList>
            <person name="Kunst F."/>
            <person name="Ogasawara N."/>
            <person name="Moszer I."/>
            <person name="Albertini A.M."/>
            <person name="Alloni G."/>
            <person name="Azevedo V."/>
            <person name="Bertero M.G."/>
            <person name="Bessieres P."/>
            <person name="Bolotin A."/>
            <person name="Borchert S."/>
            <person name="Borriss R."/>
            <person name="Boursier L."/>
            <person name="Brans A."/>
            <person name="Braun M."/>
            <person name="Brignell S.C."/>
            <person name="Bron S."/>
            <person name="Brouillet S."/>
            <person name="Bruschi C.V."/>
            <person name="Caldwell B."/>
            <person name="Capuano V."/>
            <person name="Carter N.M."/>
            <person name="Choi S.-K."/>
            <person name="Codani J.-J."/>
            <person name="Connerton I.F."/>
            <person name="Cummings N.J."/>
            <person name="Daniel R.A."/>
            <person name="Denizot F."/>
            <person name="Devine K.M."/>
            <person name="Duesterhoeft A."/>
            <person name="Ehrlich S.D."/>
            <person name="Emmerson P.T."/>
            <person name="Entian K.-D."/>
            <person name="Errington J."/>
            <person name="Fabret C."/>
            <person name="Ferrari E."/>
            <person name="Foulger D."/>
            <person name="Fritz C."/>
            <person name="Fujita M."/>
            <person name="Fujita Y."/>
            <person name="Fuma S."/>
            <person name="Galizzi A."/>
            <person name="Galleron N."/>
            <person name="Ghim S.-Y."/>
            <person name="Glaser P."/>
            <person name="Goffeau A."/>
            <person name="Golightly E.J."/>
            <person name="Grandi G."/>
            <person name="Guiseppi G."/>
            <person name="Guy B.J."/>
            <person name="Haga K."/>
            <person name="Haiech J."/>
            <person name="Harwood C.R."/>
            <person name="Henaut A."/>
            <person name="Hilbert H."/>
            <person name="Holsappel S."/>
            <person name="Hosono S."/>
            <person name="Hullo M.-F."/>
            <person name="Itaya M."/>
            <person name="Jones L.-M."/>
            <person name="Joris B."/>
            <person name="Karamata D."/>
            <person name="Kasahara Y."/>
            <person name="Klaerr-Blanchard M."/>
            <person name="Klein C."/>
            <person name="Kobayashi Y."/>
            <person name="Koetter P."/>
            <person name="Koningstein G."/>
            <person name="Krogh S."/>
            <person name="Kumano M."/>
            <person name="Kurita K."/>
            <person name="Lapidus A."/>
            <person name="Lardinois S."/>
            <person name="Lauber J."/>
            <person name="Lazarevic V."/>
            <person name="Lee S.-M."/>
            <person name="Levine A."/>
            <person name="Liu H."/>
            <person name="Masuda S."/>
            <person name="Mauel C."/>
            <person name="Medigue C."/>
            <person name="Medina N."/>
            <person name="Mellado R.P."/>
            <person name="Mizuno M."/>
            <person name="Moestl D."/>
            <person name="Nakai S."/>
            <person name="Noback M."/>
            <person name="Noone D."/>
            <person name="O'Reilly M."/>
            <person name="Ogawa K."/>
            <person name="Ogiwara A."/>
            <person name="Oudega B."/>
            <person name="Park S.-H."/>
            <person name="Parro V."/>
            <person name="Pohl T.M."/>
            <person name="Portetelle D."/>
            <person name="Porwollik S."/>
            <person name="Prescott A.M."/>
            <person name="Presecan E."/>
            <person name="Pujic P."/>
            <person name="Purnelle B."/>
            <person name="Rapoport G."/>
            <person name="Rey M."/>
            <person name="Reynolds S."/>
            <person name="Rieger M."/>
            <person name="Rivolta C."/>
            <person name="Rocha E."/>
            <person name="Roche B."/>
            <person name="Rose M."/>
            <person name="Sadaie Y."/>
            <person name="Sato T."/>
            <person name="Scanlan E."/>
            <person name="Schleich S."/>
            <person name="Schroeter R."/>
            <person name="Scoffone F."/>
            <person name="Sekiguchi J."/>
            <person name="Sekowska A."/>
            <person name="Seror S.J."/>
            <person name="Serror P."/>
            <person name="Shin B.-S."/>
            <person name="Soldo B."/>
            <person name="Sorokin A."/>
            <person name="Tacconi E."/>
            <person name="Takagi T."/>
            <person name="Takahashi H."/>
            <person name="Takemaru K."/>
            <person name="Takeuchi M."/>
            <person name="Tamakoshi A."/>
            <person name="Tanaka T."/>
            <person name="Terpstra P."/>
            <person name="Tognoni A."/>
            <person name="Tosato V."/>
            <person name="Uchiyama S."/>
            <person name="Vandenbol M."/>
            <person name="Vannier F."/>
            <person name="Vassarotti A."/>
            <person name="Viari A."/>
            <person name="Wambutt R."/>
            <person name="Wedler E."/>
            <person name="Wedler H."/>
            <person name="Weitzenegger T."/>
            <person name="Winters P."/>
            <person name="Wipat A."/>
            <person name="Yamamoto H."/>
            <person name="Yamane K."/>
            <person name="Yasumoto K."/>
            <person name="Yata K."/>
            <person name="Yoshida K."/>
            <person name="Yoshikawa H.-F."/>
            <person name="Zumstein E."/>
            <person name="Yoshikawa H."/>
            <person name="Danchin A."/>
        </authorList>
    </citation>
    <scope>NUCLEOTIDE SEQUENCE [LARGE SCALE GENOMIC DNA]</scope>
    <source>
        <strain>168</strain>
    </source>
</reference>
<evidence type="ECO:0000255" key="1">
    <source>
        <dbReference type="PROSITE-ProRule" id="PRU00434"/>
    </source>
</evidence>
<evidence type="ECO:0000269" key="2">
    <source>
    </source>
</evidence>
<evidence type="ECO:0000305" key="3"/>